<reference key="1">
    <citation type="journal article" date="1992" name="Plant Mol. Biol.">
        <title>The beta-tubulin gene family of pea: primary structures, genomic organization and intron-dependent evolution of genes.</title>
        <authorList>
            <person name="Liaud M.-F."/>
            <person name="Brinkmann H."/>
            <person name="Cerff R."/>
        </authorList>
    </citation>
    <scope>NUCLEOTIDE SEQUENCE [MRNA]</scope>
    <source>
        <strain>cv. Rosakrone</strain>
    </source>
</reference>
<accession>P29501</accession>
<evidence type="ECO:0000250" key="1">
    <source>
        <dbReference type="UniProtKB" id="P68363"/>
    </source>
</evidence>
<evidence type="ECO:0000250" key="2">
    <source>
        <dbReference type="UniProtKB" id="Q13509"/>
    </source>
</evidence>
<evidence type="ECO:0000256" key="3">
    <source>
        <dbReference type="SAM" id="MobiDB-lite"/>
    </source>
</evidence>
<evidence type="ECO:0000305" key="4"/>
<feature type="chain" id="PRO_0000048372" description="Tubulin beta-2 chain">
    <location>
        <begin position="1" status="less than"/>
        <end position="447"/>
    </location>
</feature>
<feature type="region of interest" description="Disordered" evidence="3">
    <location>
        <begin position="411"/>
        <end position="447"/>
    </location>
</feature>
<feature type="compositionally biased region" description="Polar residues" evidence="3">
    <location>
        <begin position="411"/>
        <end position="425"/>
    </location>
</feature>
<feature type="compositionally biased region" description="Acidic residues" evidence="3">
    <location>
        <begin position="427"/>
        <end position="440"/>
    </location>
</feature>
<feature type="binding site" evidence="2">
    <location>
        <position position="9"/>
    </location>
    <ligand>
        <name>GTP</name>
        <dbReference type="ChEBI" id="CHEBI:37565"/>
    </ligand>
</feature>
<feature type="binding site" evidence="1">
    <location>
        <position position="67"/>
    </location>
    <ligand>
        <name>GTP</name>
        <dbReference type="ChEBI" id="CHEBI:37565"/>
    </ligand>
</feature>
<feature type="binding site" evidence="1">
    <location>
        <position position="67"/>
    </location>
    <ligand>
        <name>Mg(2+)</name>
        <dbReference type="ChEBI" id="CHEBI:18420"/>
    </ligand>
</feature>
<feature type="binding site" evidence="2">
    <location>
        <position position="136"/>
    </location>
    <ligand>
        <name>GTP</name>
        <dbReference type="ChEBI" id="CHEBI:37565"/>
    </ligand>
</feature>
<feature type="binding site" evidence="2">
    <location>
        <position position="140"/>
    </location>
    <ligand>
        <name>GTP</name>
        <dbReference type="ChEBI" id="CHEBI:37565"/>
    </ligand>
</feature>
<feature type="binding site" evidence="2">
    <location>
        <position position="141"/>
    </location>
    <ligand>
        <name>GTP</name>
        <dbReference type="ChEBI" id="CHEBI:37565"/>
    </ligand>
</feature>
<feature type="binding site" evidence="2">
    <location>
        <position position="142"/>
    </location>
    <ligand>
        <name>GTP</name>
        <dbReference type="ChEBI" id="CHEBI:37565"/>
    </ligand>
</feature>
<feature type="binding site" evidence="2">
    <location>
        <position position="202"/>
    </location>
    <ligand>
        <name>GTP</name>
        <dbReference type="ChEBI" id="CHEBI:37565"/>
    </ligand>
</feature>
<feature type="binding site" evidence="2">
    <location>
        <position position="224"/>
    </location>
    <ligand>
        <name>GTP</name>
        <dbReference type="ChEBI" id="CHEBI:37565"/>
    </ligand>
</feature>
<feature type="non-terminal residue">
    <location>
        <position position="1"/>
    </location>
</feature>
<keyword id="KW-0963">Cytoplasm</keyword>
<keyword id="KW-0206">Cytoskeleton</keyword>
<keyword id="KW-0342">GTP-binding</keyword>
<keyword id="KW-0460">Magnesium</keyword>
<keyword id="KW-0479">Metal-binding</keyword>
<keyword id="KW-0493">Microtubule</keyword>
<keyword id="KW-0547">Nucleotide-binding</keyword>
<organism>
    <name type="scientific">Pisum sativum</name>
    <name type="common">Garden pea</name>
    <name type="synonym">Lathyrus oleraceus</name>
    <dbReference type="NCBI Taxonomy" id="3888"/>
    <lineage>
        <taxon>Eukaryota</taxon>
        <taxon>Viridiplantae</taxon>
        <taxon>Streptophyta</taxon>
        <taxon>Embryophyta</taxon>
        <taxon>Tracheophyta</taxon>
        <taxon>Spermatophyta</taxon>
        <taxon>Magnoliopsida</taxon>
        <taxon>eudicotyledons</taxon>
        <taxon>Gunneridae</taxon>
        <taxon>Pentapetalae</taxon>
        <taxon>rosids</taxon>
        <taxon>fabids</taxon>
        <taxon>Fabales</taxon>
        <taxon>Fabaceae</taxon>
        <taxon>Papilionoideae</taxon>
        <taxon>50 kb inversion clade</taxon>
        <taxon>NPAAA clade</taxon>
        <taxon>Hologalegina</taxon>
        <taxon>IRL clade</taxon>
        <taxon>Fabeae</taxon>
        <taxon>Pisum</taxon>
    </lineage>
</organism>
<name>TBB2_PEA</name>
<proteinExistence type="evidence at transcript level"/>
<gene>
    <name type="primary">TUBB2</name>
    <name type="synonym">TUB2</name>
</gene>
<dbReference type="EMBL" id="X54845">
    <property type="protein sequence ID" value="CAA38614.1"/>
    <property type="molecule type" value="mRNA"/>
</dbReference>
<dbReference type="PIR" id="S20869">
    <property type="entry name" value="S20869"/>
</dbReference>
<dbReference type="SMR" id="P29501"/>
<dbReference type="GO" id="GO:0005737">
    <property type="term" value="C:cytoplasm"/>
    <property type="evidence" value="ECO:0007669"/>
    <property type="project" value="UniProtKB-KW"/>
</dbReference>
<dbReference type="GO" id="GO:0005874">
    <property type="term" value="C:microtubule"/>
    <property type="evidence" value="ECO:0007669"/>
    <property type="project" value="UniProtKB-KW"/>
</dbReference>
<dbReference type="GO" id="GO:0005525">
    <property type="term" value="F:GTP binding"/>
    <property type="evidence" value="ECO:0007669"/>
    <property type="project" value="UniProtKB-KW"/>
</dbReference>
<dbReference type="GO" id="GO:0003924">
    <property type="term" value="F:GTPase activity"/>
    <property type="evidence" value="ECO:0007669"/>
    <property type="project" value="InterPro"/>
</dbReference>
<dbReference type="GO" id="GO:0046872">
    <property type="term" value="F:metal ion binding"/>
    <property type="evidence" value="ECO:0007669"/>
    <property type="project" value="UniProtKB-KW"/>
</dbReference>
<dbReference type="GO" id="GO:0005200">
    <property type="term" value="F:structural constituent of cytoskeleton"/>
    <property type="evidence" value="ECO:0007669"/>
    <property type="project" value="InterPro"/>
</dbReference>
<dbReference type="GO" id="GO:0007017">
    <property type="term" value="P:microtubule-based process"/>
    <property type="evidence" value="ECO:0007669"/>
    <property type="project" value="InterPro"/>
</dbReference>
<dbReference type="CDD" id="cd02187">
    <property type="entry name" value="beta_tubulin"/>
    <property type="match status" value="1"/>
</dbReference>
<dbReference type="FunFam" id="1.10.287.600:FF:000002">
    <property type="entry name" value="Tubulin beta chain"/>
    <property type="match status" value="1"/>
</dbReference>
<dbReference type="FunFam" id="3.30.1330.20:FF:000002">
    <property type="entry name" value="Tubulin beta chain"/>
    <property type="match status" value="1"/>
</dbReference>
<dbReference type="FunFam" id="3.40.50.1440:FF:000005">
    <property type="entry name" value="Tubulin beta chain"/>
    <property type="match status" value="1"/>
</dbReference>
<dbReference type="Gene3D" id="1.10.287.600">
    <property type="entry name" value="Helix hairpin bin"/>
    <property type="match status" value="1"/>
</dbReference>
<dbReference type="Gene3D" id="3.30.1330.20">
    <property type="entry name" value="Tubulin/FtsZ, C-terminal domain"/>
    <property type="match status" value="1"/>
</dbReference>
<dbReference type="Gene3D" id="3.40.50.1440">
    <property type="entry name" value="Tubulin/FtsZ, GTPase domain"/>
    <property type="match status" value="1"/>
</dbReference>
<dbReference type="InterPro" id="IPR002453">
    <property type="entry name" value="Beta_tubulin"/>
</dbReference>
<dbReference type="InterPro" id="IPR008280">
    <property type="entry name" value="Tub_FtsZ_C"/>
</dbReference>
<dbReference type="InterPro" id="IPR000217">
    <property type="entry name" value="Tubulin"/>
</dbReference>
<dbReference type="InterPro" id="IPR037103">
    <property type="entry name" value="Tubulin/FtsZ-like_C"/>
</dbReference>
<dbReference type="InterPro" id="IPR018316">
    <property type="entry name" value="Tubulin/FtsZ_2-layer-sand-dom"/>
</dbReference>
<dbReference type="InterPro" id="IPR036525">
    <property type="entry name" value="Tubulin/FtsZ_GTPase_sf"/>
</dbReference>
<dbReference type="InterPro" id="IPR023123">
    <property type="entry name" value="Tubulin_C"/>
</dbReference>
<dbReference type="InterPro" id="IPR017975">
    <property type="entry name" value="Tubulin_CS"/>
</dbReference>
<dbReference type="InterPro" id="IPR003008">
    <property type="entry name" value="Tubulin_FtsZ_GTPase"/>
</dbReference>
<dbReference type="PANTHER" id="PTHR11588">
    <property type="entry name" value="TUBULIN"/>
    <property type="match status" value="1"/>
</dbReference>
<dbReference type="Pfam" id="PF00091">
    <property type="entry name" value="Tubulin"/>
    <property type="match status" value="1"/>
</dbReference>
<dbReference type="Pfam" id="PF03953">
    <property type="entry name" value="Tubulin_C"/>
    <property type="match status" value="1"/>
</dbReference>
<dbReference type="PRINTS" id="PR01163">
    <property type="entry name" value="BETATUBULIN"/>
</dbReference>
<dbReference type="PRINTS" id="PR01161">
    <property type="entry name" value="TUBULIN"/>
</dbReference>
<dbReference type="SMART" id="SM00864">
    <property type="entry name" value="Tubulin"/>
    <property type="match status" value="1"/>
</dbReference>
<dbReference type="SMART" id="SM00865">
    <property type="entry name" value="Tubulin_C"/>
    <property type="match status" value="1"/>
</dbReference>
<dbReference type="SUPFAM" id="SSF55307">
    <property type="entry name" value="Tubulin C-terminal domain-like"/>
    <property type="match status" value="1"/>
</dbReference>
<dbReference type="SUPFAM" id="SSF52490">
    <property type="entry name" value="Tubulin nucleotide-binding domain-like"/>
    <property type="match status" value="1"/>
</dbReference>
<dbReference type="PROSITE" id="PS00227">
    <property type="entry name" value="TUBULIN"/>
    <property type="match status" value="1"/>
</dbReference>
<comment type="function">
    <text>Tubulin is the major constituent of microtubules, a cylinder consisting of laterally associated linear protofilaments composed of alpha- and beta-tubulin heterodimers. Microtubules grow by the addition of GTP-tubulin dimers to the microtubule end, where a stabilizing cap forms. Below the cap, tubulin dimers are in GDP-bound state, owing to GTPase activity of alpha-tubulin.</text>
</comment>
<comment type="cofactor">
    <cofactor evidence="1">
        <name>Mg(2+)</name>
        <dbReference type="ChEBI" id="CHEBI:18420"/>
    </cofactor>
</comment>
<comment type="subunit">
    <text>Dimer of alpha and beta chains. A typical microtubule is a hollow water-filled tube with an outer diameter of 25 nm and an inner diameter of 15 nM. Alpha-beta heterodimers associate head-to-tail to form protofilaments running lengthwise along the microtubule wall with the beta-tubulin subunit facing the microtubule plus end conferring a structural polarity. Microtubules usually have 13 protofilaments but different protofilament numbers can be found in some organisms and specialized cells.</text>
</comment>
<comment type="subcellular location">
    <subcellularLocation>
        <location>Cytoplasm</location>
        <location>Cytoskeleton</location>
    </subcellularLocation>
</comment>
<comment type="similarity">
    <text evidence="4">Belongs to the tubulin family.</text>
</comment>
<protein>
    <recommendedName>
        <fullName>Tubulin beta-2 chain</fullName>
    </recommendedName>
    <alternativeName>
        <fullName>Beta-2-tubulin</fullName>
    </alternativeName>
</protein>
<sequence length="447" mass="50401">EIVHIQGGQCGNQIGAKFWEVVCAEHGIDPTGRYGGDTDLQLERINVYYNEASCGRYVPRAVLMDLEPGTMDSVRSGPYGQIFRPDNFVFGQSGAGNNWAKGHYTEGAELIDSVLDVVRKEAENCDCLQGFQVCHSLGGGTGSGMGTLLISKIREEYPDRMMLTFSVFPSPKVSDTVVEPYNATLSVHQLVENADECMVLDNEALYDICFRTLKLTTPSFGDLNHLISATMSGVTCCLRFPGQLNSDLRKLAVNLIPFPRLHFFMLGFAPLTSRGSQQYRALSVPEITQQMWDSKNMMCAADPRHGRYLTASAIFRGKMSTKEVDEQMMNVQNKNSSYFVEWIPNNVKSTVCDIPPTGLKMASTFIGNSTSIQEMFRRVSEQFTAMFRRKAFLHWYTGEGMDEMEFTEAESNMNDLVSEYQQYQDATAEEDEYEEEEEDYHQEHDEM</sequence>